<keyword id="KW-0210">Decarboxylase</keyword>
<keyword id="KW-0456">Lyase</keyword>
<keyword id="KW-0665">Pyrimidine biosynthesis</keyword>
<keyword id="KW-1185">Reference proteome</keyword>
<accession>P77888</accession>
<accession>F9URI0</accession>
<name>PYRF_LACPL</name>
<dbReference type="EC" id="4.1.1.23" evidence="1"/>
<dbReference type="EMBL" id="Z54240">
    <property type="protein sequence ID" value="CAA91007.2"/>
    <property type="molecule type" value="Genomic_DNA"/>
</dbReference>
<dbReference type="EMBL" id="AL935263">
    <property type="protein sequence ID" value="CCC79819.1"/>
    <property type="molecule type" value="Genomic_DNA"/>
</dbReference>
<dbReference type="RefSeq" id="WP_003642610.1">
    <property type="nucleotide sequence ID" value="NC_004567.2"/>
</dbReference>
<dbReference type="RefSeq" id="YP_004890333.1">
    <property type="nucleotide sequence ID" value="NC_004567.2"/>
</dbReference>
<dbReference type="SMR" id="P77888"/>
<dbReference type="STRING" id="220668.lp_2698"/>
<dbReference type="EnsemblBacteria" id="CCC79819">
    <property type="protein sequence ID" value="CCC79819"/>
    <property type="gene ID" value="lp_2698"/>
</dbReference>
<dbReference type="GeneID" id="77215924"/>
<dbReference type="KEGG" id="lpl:lp_2698"/>
<dbReference type="PATRIC" id="fig|220668.9.peg.2258"/>
<dbReference type="eggNOG" id="COG0284">
    <property type="taxonomic scope" value="Bacteria"/>
</dbReference>
<dbReference type="HOGENOM" id="CLU_067069_1_1_9"/>
<dbReference type="OrthoDB" id="9806203at2"/>
<dbReference type="PhylomeDB" id="P77888"/>
<dbReference type="UniPathway" id="UPA00070">
    <property type="reaction ID" value="UER00120"/>
</dbReference>
<dbReference type="Proteomes" id="UP000000432">
    <property type="component" value="Chromosome"/>
</dbReference>
<dbReference type="GO" id="GO:0005829">
    <property type="term" value="C:cytosol"/>
    <property type="evidence" value="ECO:0007669"/>
    <property type="project" value="TreeGrafter"/>
</dbReference>
<dbReference type="GO" id="GO:0004590">
    <property type="term" value="F:orotidine-5'-phosphate decarboxylase activity"/>
    <property type="evidence" value="ECO:0007669"/>
    <property type="project" value="UniProtKB-UniRule"/>
</dbReference>
<dbReference type="GO" id="GO:0006207">
    <property type="term" value="P:'de novo' pyrimidine nucleobase biosynthetic process"/>
    <property type="evidence" value="ECO:0007669"/>
    <property type="project" value="InterPro"/>
</dbReference>
<dbReference type="GO" id="GO:0044205">
    <property type="term" value="P:'de novo' UMP biosynthetic process"/>
    <property type="evidence" value="ECO:0007669"/>
    <property type="project" value="UniProtKB-UniRule"/>
</dbReference>
<dbReference type="CDD" id="cd04725">
    <property type="entry name" value="OMP_decarboxylase_like"/>
    <property type="match status" value="1"/>
</dbReference>
<dbReference type="FunFam" id="3.20.20.70:FF:000015">
    <property type="entry name" value="Orotidine 5'-phosphate decarboxylase"/>
    <property type="match status" value="1"/>
</dbReference>
<dbReference type="Gene3D" id="3.20.20.70">
    <property type="entry name" value="Aldolase class I"/>
    <property type="match status" value="1"/>
</dbReference>
<dbReference type="HAMAP" id="MF_01200_B">
    <property type="entry name" value="OMPdecase_type1_B"/>
    <property type="match status" value="1"/>
</dbReference>
<dbReference type="InterPro" id="IPR013785">
    <property type="entry name" value="Aldolase_TIM"/>
</dbReference>
<dbReference type="InterPro" id="IPR014732">
    <property type="entry name" value="OMPdecase"/>
</dbReference>
<dbReference type="InterPro" id="IPR018089">
    <property type="entry name" value="OMPdecase_AS"/>
</dbReference>
<dbReference type="InterPro" id="IPR047596">
    <property type="entry name" value="OMPdecase_bac"/>
</dbReference>
<dbReference type="InterPro" id="IPR001754">
    <property type="entry name" value="OMPdeCOase_dom"/>
</dbReference>
<dbReference type="InterPro" id="IPR011060">
    <property type="entry name" value="RibuloseP-bd_barrel"/>
</dbReference>
<dbReference type="NCBIfam" id="NF001273">
    <property type="entry name" value="PRK00230.1"/>
    <property type="match status" value="1"/>
</dbReference>
<dbReference type="NCBIfam" id="TIGR01740">
    <property type="entry name" value="pyrF"/>
    <property type="match status" value="1"/>
</dbReference>
<dbReference type="PANTHER" id="PTHR32119">
    <property type="entry name" value="OROTIDINE 5'-PHOSPHATE DECARBOXYLASE"/>
    <property type="match status" value="1"/>
</dbReference>
<dbReference type="PANTHER" id="PTHR32119:SF2">
    <property type="entry name" value="OROTIDINE 5'-PHOSPHATE DECARBOXYLASE"/>
    <property type="match status" value="1"/>
</dbReference>
<dbReference type="Pfam" id="PF00215">
    <property type="entry name" value="OMPdecase"/>
    <property type="match status" value="1"/>
</dbReference>
<dbReference type="SMART" id="SM00934">
    <property type="entry name" value="OMPdecase"/>
    <property type="match status" value="1"/>
</dbReference>
<dbReference type="SUPFAM" id="SSF51366">
    <property type="entry name" value="Ribulose-phoshate binding barrel"/>
    <property type="match status" value="1"/>
</dbReference>
<dbReference type="PROSITE" id="PS00156">
    <property type="entry name" value="OMPDECASE"/>
    <property type="match status" value="1"/>
</dbReference>
<reference key="1">
    <citation type="journal article" date="1996" name="Gene">
        <title>Structure and organisation of the pyrimidine biosynthesis pathway genes in Lactobacillus plantarum: a PCR strategy for sequencing without cloning.</title>
        <authorList>
            <person name="Elagoez A."/>
            <person name="Abdi A."/>
            <person name="Hubert J.-C."/>
            <person name="Kammerer B."/>
        </authorList>
    </citation>
    <scope>NUCLEOTIDE SEQUENCE [GENOMIC DNA]</scope>
    <source>
        <strain>ATCC 8014 / CCM 1904 / DSM 20205 / NCDO 82 / NCIB 6376</strain>
    </source>
</reference>
<reference key="2">
    <citation type="submission" date="2003-12" db="EMBL/GenBank/DDBJ databases">
        <authorList>
            <person name="Kammerer B."/>
            <person name="Elagoz A."/>
            <person name="Abdi A."/>
            <person name="Hubert J.-C."/>
            <person name="Bringel F."/>
        </authorList>
    </citation>
    <scope>SEQUENCE REVISION</scope>
</reference>
<reference key="3">
    <citation type="journal article" date="2003" name="Proc. Natl. Acad. Sci. U.S.A.">
        <title>Complete genome sequence of Lactobacillus plantarum WCFS1.</title>
        <authorList>
            <person name="Kleerebezem M."/>
            <person name="Boekhorst J."/>
            <person name="van Kranenburg R."/>
            <person name="Molenaar D."/>
            <person name="Kuipers O.P."/>
            <person name="Leer R."/>
            <person name="Tarchini R."/>
            <person name="Peters S.A."/>
            <person name="Sandbrink H.M."/>
            <person name="Fiers M.W.E.J."/>
            <person name="Stiekema W."/>
            <person name="Klein Lankhorst R.M."/>
            <person name="Bron P.A."/>
            <person name="Hoffer S.M."/>
            <person name="Nierop Groot M.N."/>
            <person name="Kerkhoven R."/>
            <person name="De Vries M."/>
            <person name="Ursing B."/>
            <person name="De Vos W.M."/>
            <person name="Siezen R.J."/>
        </authorList>
    </citation>
    <scope>NUCLEOTIDE SEQUENCE [LARGE SCALE GENOMIC DNA]</scope>
    <source>
        <strain>ATCC BAA-793 / NCIMB 8826 / WCFS1</strain>
    </source>
</reference>
<reference key="4">
    <citation type="journal article" date="2012" name="J. Bacteriol.">
        <title>Complete resequencing and reannotation of the Lactobacillus plantarum WCFS1 genome.</title>
        <authorList>
            <person name="Siezen R.J."/>
            <person name="Francke C."/>
            <person name="Renckens B."/>
            <person name="Boekhorst J."/>
            <person name="Wels M."/>
            <person name="Kleerebezem M."/>
            <person name="van Hijum S.A."/>
        </authorList>
    </citation>
    <scope>NUCLEOTIDE SEQUENCE [LARGE SCALE GENOMIC DNA]</scope>
    <scope>GENOME REANNOTATION</scope>
    <source>
        <strain>ATCC BAA-793 / NCIMB 8826 / WCFS1</strain>
    </source>
</reference>
<comment type="function">
    <text evidence="1">Catalyzes the decarboxylation of orotidine 5'-monophosphate (OMP) to uridine 5'-monophosphate (UMP).</text>
</comment>
<comment type="catalytic activity">
    <reaction evidence="1">
        <text>orotidine 5'-phosphate + H(+) = UMP + CO2</text>
        <dbReference type="Rhea" id="RHEA:11596"/>
        <dbReference type="ChEBI" id="CHEBI:15378"/>
        <dbReference type="ChEBI" id="CHEBI:16526"/>
        <dbReference type="ChEBI" id="CHEBI:57538"/>
        <dbReference type="ChEBI" id="CHEBI:57865"/>
        <dbReference type="EC" id="4.1.1.23"/>
    </reaction>
</comment>
<comment type="pathway">
    <text evidence="1">Pyrimidine metabolism; UMP biosynthesis via de novo pathway; UMP from orotate: step 2/2.</text>
</comment>
<comment type="subunit">
    <text evidence="1">Homodimer.</text>
</comment>
<comment type="similarity">
    <text evidence="1">Belongs to the OMP decarboxylase family. Type 1 subfamily.</text>
</comment>
<protein>
    <recommendedName>
        <fullName evidence="1">Orotidine 5'-phosphate decarboxylase</fullName>
        <ecNumber evidence="1">4.1.1.23</ecNumber>
    </recommendedName>
    <alternativeName>
        <fullName evidence="1">OMP decarboxylase</fullName>
        <shortName evidence="1">OMPDCase</shortName>
        <shortName evidence="1">OMPdecase</shortName>
    </alternativeName>
</protein>
<evidence type="ECO:0000255" key="1">
    <source>
        <dbReference type="HAMAP-Rule" id="MF_01200"/>
    </source>
</evidence>
<sequence>MKRPIIIALDFPTAERALAFLDQFPADLHVTVKIGMELFYAAGPSIVTDVQARGHAVFLDLKLHDIPNTVESAMRVIGRLGVTYTTVHAAGGHVMLSAAKRGLVAGAMAAGVTAPKLLAITQLTSTNQAILNQDQQIMGTVRASVVHYAKLARASDCDGVICSAQEVQAIHTAVGADFLGITPGIRPASAQSDDQQRVMTPAAAAKAGSNGLVIGRPITQAAEPVQAYRDIMTEWSN</sequence>
<organism>
    <name type="scientific">Lactiplantibacillus plantarum (strain ATCC BAA-793 / NCIMB 8826 / WCFS1)</name>
    <name type="common">Lactobacillus plantarum</name>
    <dbReference type="NCBI Taxonomy" id="220668"/>
    <lineage>
        <taxon>Bacteria</taxon>
        <taxon>Bacillati</taxon>
        <taxon>Bacillota</taxon>
        <taxon>Bacilli</taxon>
        <taxon>Lactobacillales</taxon>
        <taxon>Lactobacillaceae</taxon>
        <taxon>Lactiplantibacillus</taxon>
    </lineage>
</organism>
<proteinExistence type="inferred from homology"/>
<feature type="chain" id="PRO_0000134551" description="Orotidine 5'-phosphate decarboxylase">
    <location>
        <begin position="1"/>
        <end position="237"/>
    </location>
</feature>
<feature type="active site" description="Proton donor" evidence="1">
    <location>
        <position position="62"/>
    </location>
</feature>
<feature type="binding site" evidence="1">
    <location>
        <position position="10"/>
    </location>
    <ligand>
        <name>substrate</name>
    </ligand>
</feature>
<feature type="binding site" evidence="1">
    <location>
        <position position="33"/>
    </location>
    <ligand>
        <name>substrate</name>
    </ligand>
</feature>
<feature type="binding site" evidence="1">
    <location>
        <begin position="60"/>
        <end position="69"/>
    </location>
    <ligand>
        <name>substrate</name>
    </ligand>
</feature>
<feature type="binding site" evidence="1">
    <location>
        <position position="124"/>
    </location>
    <ligand>
        <name>substrate</name>
    </ligand>
</feature>
<feature type="binding site" evidence="1">
    <location>
        <position position="186"/>
    </location>
    <ligand>
        <name>substrate</name>
    </ligand>
</feature>
<feature type="binding site" evidence="1">
    <location>
        <position position="195"/>
    </location>
    <ligand>
        <name>substrate</name>
    </ligand>
</feature>
<feature type="binding site" evidence="1">
    <location>
        <position position="215"/>
    </location>
    <ligand>
        <name>substrate</name>
    </ligand>
</feature>
<feature type="binding site" evidence="1">
    <location>
        <position position="216"/>
    </location>
    <ligand>
        <name>substrate</name>
    </ligand>
</feature>
<gene>
    <name evidence="1" type="primary">pyrF</name>
    <name type="ordered locus">lp_2698</name>
</gene>